<gene>
    <name evidence="1" type="primary">greA</name>
    <name type="ordered locus">Nham_2876</name>
</gene>
<sequence length="158" mass="17221">MIEKVPMTRGGHAALADELKKRQSVDRPRIIEHIAEARSHGDLSENAEYHAAKEDQSHNEGRIAELEDKLARAEIIDVSKLSGDTIKFGATVTLIDEDTDKKAVWQIVGEAEADAKKGRISITSPLARALIGKKKGASVEVVAPGGAKAYEITKVEWR</sequence>
<dbReference type="EMBL" id="CP000319">
    <property type="protein sequence ID" value="ABE63644.1"/>
    <property type="molecule type" value="Genomic_DNA"/>
</dbReference>
<dbReference type="RefSeq" id="WP_011511308.1">
    <property type="nucleotide sequence ID" value="NC_007964.1"/>
</dbReference>
<dbReference type="SMR" id="Q1QJF3"/>
<dbReference type="STRING" id="323097.Nham_2876"/>
<dbReference type="KEGG" id="nha:Nham_2876"/>
<dbReference type="eggNOG" id="COG0782">
    <property type="taxonomic scope" value="Bacteria"/>
</dbReference>
<dbReference type="HOGENOM" id="CLU_101379_2_0_5"/>
<dbReference type="OrthoDB" id="9808774at2"/>
<dbReference type="Proteomes" id="UP000001953">
    <property type="component" value="Chromosome"/>
</dbReference>
<dbReference type="GO" id="GO:0003677">
    <property type="term" value="F:DNA binding"/>
    <property type="evidence" value="ECO:0007669"/>
    <property type="project" value="UniProtKB-UniRule"/>
</dbReference>
<dbReference type="GO" id="GO:0070063">
    <property type="term" value="F:RNA polymerase binding"/>
    <property type="evidence" value="ECO:0007669"/>
    <property type="project" value="InterPro"/>
</dbReference>
<dbReference type="GO" id="GO:0006354">
    <property type="term" value="P:DNA-templated transcription elongation"/>
    <property type="evidence" value="ECO:0007669"/>
    <property type="project" value="TreeGrafter"/>
</dbReference>
<dbReference type="GO" id="GO:0032784">
    <property type="term" value="P:regulation of DNA-templated transcription elongation"/>
    <property type="evidence" value="ECO:0007669"/>
    <property type="project" value="UniProtKB-UniRule"/>
</dbReference>
<dbReference type="FunFam" id="1.10.287.180:FF:000001">
    <property type="entry name" value="Transcription elongation factor GreA"/>
    <property type="match status" value="1"/>
</dbReference>
<dbReference type="FunFam" id="3.10.50.30:FF:000001">
    <property type="entry name" value="Transcription elongation factor GreA"/>
    <property type="match status" value="1"/>
</dbReference>
<dbReference type="Gene3D" id="3.10.50.30">
    <property type="entry name" value="Transcription elongation factor, GreA/GreB, C-terminal domain"/>
    <property type="match status" value="1"/>
</dbReference>
<dbReference type="Gene3D" id="1.10.287.180">
    <property type="entry name" value="Transcription elongation factor, GreA/GreB, N-terminal domain"/>
    <property type="match status" value="1"/>
</dbReference>
<dbReference type="HAMAP" id="MF_00105">
    <property type="entry name" value="GreA_GreB"/>
    <property type="match status" value="1"/>
</dbReference>
<dbReference type="InterPro" id="IPR036953">
    <property type="entry name" value="GreA/GreB_C_sf"/>
</dbReference>
<dbReference type="InterPro" id="IPR018151">
    <property type="entry name" value="TF_GreA/GreB_CS"/>
</dbReference>
<dbReference type="InterPro" id="IPR006359">
    <property type="entry name" value="Tscrpt_elong_fac_GreA"/>
</dbReference>
<dbReference type="InterPro" id="IPR028624">
    <property type="entry name" value="Tscrpt_elong_fac_GreA/B"/>
</dbReference>
<dbReference type="InterPro" id="IPR001437">
    <property type="entry name" value="Tscrpt_elong_fac_GreA/B_C"/>
</dbReference>
<dbReference type="InterPro" id="IPR023459">
    <property type="entry name" value="Tscrpt_elong_fac_GreA/B_fam"/>
</dbReference>
<dbReference type="InterPro" id="IPR022691">
    <property type="entry name" value="Tscrpt_elong_fac_GreA/B_N"/>
</dbReference>
<dbReference type="InterPro" id="IPR036805">
    <property type="entry name" value="Tscrpt_elong_fac_GreA/B_N_sf"/>
</dbReference>
<dbReference type="NCBIfam" id="TIGR01462">
    <property type="entry name" value="greA"/>
    <property type="match status" value="1"/>
</dbReference>
<dbReference type="NCBIfam" id="NF001261">
    <property type="entry name" value="PRK00226.1-2"/>
    <property type="match status" value="1"/>
</dbReference>
<dbReference type="NCBIfam" id="NF001263">
    <property type="entry name" value="PRK00226.1-4"/>
    <property type="match status" value="1"/>
</dbReference>
<dbReference type="NCBIfam" id="NF001264">
    <property type="entry name" value="PRK00226.1-5"/>
    <property type="match status" value="1"/>
</dbReference>
<dbReference type="PANTHER" id="PTHR30437">
    <property type="entry name" value="TRANSCRIPTION ELONGATION FACTOR GREA"/>
    <property type="match status" value="1"/>
</dbReference>
<dbReference type="PANTHER" id="PTHR30437:SF4">
    <property type="entry name" value="TRANSCRIPTION ELONGATION FACTOR GREA"/>
    <property type="match status" value="1"/>
</dbReference>
<dbReference type="Pfam" id="PF01272">
    <property type="entry name" value="GreA_GreB"/>
    <property type="match status" value="1"/>
</dbReference>
<dbReference type="Pfam" id="PF03449">
    <property type="entry name" value="GreA_GreB_N"/>
    <property type="match status" value="1"/>
</dbReference>
<dbReference type="PIRSF" id="PIRSF006092">
    <property type="entry name" value="GreA_GreB"/>
    <property type="match status" value="1"/>
</dbReference>
<dbReference type="SUPFAM" id="SSF54534">
    <property type="entry name" value="FKBP-like"/>
    <property type="match status" value="1"/>
</dbReference>
<dbReference type="SUPFAM" id="SSF46557">
    <property type="entry name" value="GreA transcript cleavage protein, N-terminal domain"/>
    <property type="match status" value="1"/>
</dbReference>
<dbReference type="PROSITE" id="PS00829">
    <property type="entry name" value="GREAB_1"/>
    <property type="match status" value="1"/>
</dbReference>
<evidence type="ECO:0000255" key="1">
    <source>
        <dbReference type="HAMAP-Rule" id="MF_00105"/>
    </source>
</evidence>
<evidence type="ECO:0000256" key="2">
    <source>
        <dbReference type="SAM" id="MobiDB-lite"/>
    </source>
</evidence>
<protein>
    <recommendedName>
        <fullName evidence="1">Transcription elongation factor GreA</fullName>
    </recommendedName>
    <alternativeName>
        <fullName evidence="1">Transcript cleavage factor GreA</fullName>
    </alternativeName>
</protein>
<proteinExistence type="inferred from homology"/>
<accession>Q1QJF3</accession>
<reference key="1">
    <citation type="submission" date="2006-03" db="EMBL/GenBank/DDBJ databases">
        <title>Complete sequence of chromosome of Nitrobacter hamburgensis X14.</title>
        <authorList>
            <consortium name="US DOE Joint Genome Institute"/>
            <person name="Copeland A."/>
            <person name="Lucas S."/>
            <person name="Lapidus A."/>
            <person name="Barry K."/>
            <person name="Detter J.C."/>
            <person name="Glavina del Rio T."/>
            <person name="Hammon N."/>
            <person name="Israni S."/>
            <person name="Dalin E."/>
            <person name="Tice H."/>
            <person name="Pitluck S."/>
            <person name="Chain P."/>
            <person name="Malfatti S."/>
            <person name="Shin M."/>
            <person name="Vergez L."/>
            <person name="Schmutz J."/>
            <person name="Larimer F."/>
            <person name="Land M."/>
            <person name="Hauser L."/>
            <person name="Kyrpides N."/>
            <person name="Ivanova N."/>
            <person name="Ward B."/>
            <person name="Arp D."/>
            <person name="Klotz M."/>
            <person name="Stein L."/>
            <person name="O'Mullan G."/>
            <person name="Starkenburg S."/>
            <person name="Sayavedra L."/>
            <person name="Poret-Peterson A.T."/>
            <person name="Gentry M.E."/>
            <person name="Bruce D."/>
            <person name="Richardson P."/>
        </authorList>
    </citation>
    <scope>NUCLEOTIDE SEQUENCE [LARGE SCALE GENOMIC DNA]</scope>
    <source>
        <strain>DSM 10229 / NCIMB 13809 / X14</strain>
    </source>
</reference>
<organism>
    <name type="scientific">Nitrobacter hamburgensis (strain DSM 10229 / NCIMB 13809 / X14)</name>
    <dbReference type="NCBI Taxonomy" id="323097"/>
    <lineage>
        <taxon>Bacteria</taxon>
        <taxon>Pseudomonadati</taxon>
        <taxon>Pseudomonadota</taxon>
        <taxon>Alphaproteobacteria</taxon>
        <taxon>Hyphomicrobiales</taxon>
        <taxon>Nitrobacteraceae</taxon>
        <taxon>Nitrobacter</taxon>
    </lineage>
</organism>
<name>GREA_NITHX</name>
<keyword id="KW-0175">Coiled coil</keyword>
<keyword id="KW-0238">DNA-binding</keyword>
<keyword id="KW-1185">Reference proteome</keyword>
<keyword id="KW-0804">Transcription</keyword>
<keyword id="KW-0805">Transcription regulation</keyword>
<feature type="chain" id="PRO_1000094178" description="Transcription elongation factor GreA">
    <location>
        <begin position="1"/>
        <end position="158"/>
    </location>
</feature>
<feature type="region of interest" description="Disordered" evidence="2">
    <location>
        <begin position="41"/>
        <end position="61"/>
    </location>
</feature>
<feature type="coiled-coil region" evidence="1">
    <location>
        <begin position="51"/>
        <end position="74"/>
    </location>
</feature>
<comment type="function">
    <text evidence="1">Necessary for efficient RNA polymerase transcription elongation past template-encoded arresting sites. The arresting sites in DNA have the property of trapping a certain fraction of elongating RNA polymerases that pass through, resulting in locked ternary complexes. Cleavage of the nascent transcript by cleavage factors such as GreA or GreB allows the resumption of elongation from the new 3'terminus. GreA releases sequences of 2 to 3 nucleotides.</text>
</comment>
<comment type="similarity">
    <text evidence="1">Belongs to the GreA/GreB family.</text>
</comment>